<name>RPOA_METSB</name>
<keyword id="KW-0240">DNA-directed RNA polymerase</keyword>
<keyword id="KW-0548">Nucleotidyltransferase</keyword>
<keyword id="KW-1185">Reference proteome</keyword>
<keyword id="KW-0804">Transcription</keyword>
<keyword id="KW-0808">Transferase</keyword>
<gene>
    <name evidence="1" type="primary">rpoA</name>
    <name type="ordered locus">Msil_2991</name>
</gene>
<organism>
    <name type="scientific">Methylocella silvestris (strain DSM 15510 / CIP 108128 / LMG 27833 / NCIMB 13906 / BL2)</name>
    <dbReference type="NCBI Taxonomy" id="395965"/>
    <lineage>
        <taxon>Bacteria</taxon>
        <taxon>Pseudomonadati</taxon>
        <taxon>Pseudomonadota</taxon>
        <taxon>Alphaproteobacteria</taxon>
        <taxon>Hyphomicrobiales</taxon>
        <taxon>Beijerinckiaceae</taxon>
        <taxon>Methylocella</taxon>
    </lineage>
</organism>
<protein>
    <recommendedName>
        <fullName evidence="1">DNA-directed RNA polymerase subunit alpha</fullName>
        <shortName evidence="1">RNAP subunit alpha</shortName>
        <ecNumber evidence="1">2.7.7.6</ecNumber>
    </recommendedName>
    <alternativeName>
        <fullName evidence="1">RNA polymerase subunit alpha</fullName>
    </alternativeName>
    <alternativeName>
        <fullName evidence="1">Transcriptase subunit alpha</fullName>
    </alternativeName>
</protein>
<evidence type="ECO:0000255" key="1">
    <source>
        <dbReference type="HAMAP-Rule" id="MF_00059"/>
    </source>
</evidence>
<sequence>MIQKNWQELTKPNKLEVISGDDPKRFATIVAGPLELGFGLTLGNSLRRILLSSLQGAAITSVHIDGVLHEFSSIPGVREDVTDIVLNIKDIAIKMPGDGPKRLVLKKQGPGKVTAGDIQTSGDISILNPGLVICTLDEGAEIRMEFTVHTGKGYVAADRNRAEDAPIGLIPIDSLYSPVKKVSYRVENTREGQNLDLDKLTLQVETNGALTPEDAVAFAARILQDQLNVFVNFEEPRRVEATPSIPELAFNPALLKKVDELELSVRSANCLKNDNIVYIGDLIQKSEGEMLRTPNFGRKSLNEIKEVLAQMGLHLGMEVNGWPPDNIDDLAKRFEEHY</sequence>
<feature type="chain" id="PRO_1000196645" description="DNA-directed RNA polymerase subunit alpha">
    <location>
        <begin position="1"/>
        <end position="338"/>
    </location>
</feature>
<feature type="region of interest" description="Alpha N-terminal domain (alpha-NTD)" evidence="1">
    <location>
        <begin position="1"/>
        <end position="234"/>
    </location>
</feature>
<feature type="region of interest" description="Alpha C-terminal domain (alpha-CTD)" evidence="1">
    <location>
        <begin position="250"/>
        <end position="338"/>
    </location>
</feature>
<reference key="1">
    <citation type="journal article" date="2010" name="J. Bacteriol.">
        <title>Complete genome sequence of the aerobic facultative methanotroph Methylocella silvestris BL2.</title>
        <authorList>
            <person name="Chen Y."/>
            <person name="Crombie A."/>
            <person name="Rahman M.T."/>
            <person name="Dedysh S.N."/>
            <person name="Liesack W."/>
            <person name="Stott M.B."/>
            <person name="Alam M."/>
            <person name="Theisen A.R."/>
            <person name="Murrell J.C."/>
            <person name="Dunfield P.F."/>
        </authorList>
    </citation>
    <scope>NUCLEOTIDE SEQUENCE [LARGE SCALE GENOMIC DNA]</scope>
    <source>
        <strain>DSM 15510 / CIP 108128 / LMG 27833 / NCIMB 13906 / BL2</strain>
    </source>
</reference>
<comment type="function">
    <text evidence="1">DNA-dependent RNA polymerase catalyzes the transcription of DNA into RNA using the four ribonucleoside triphosphates as substrates.</text>
</comment>
<comment type="catalytic activity">
    <reaction evidence="1">
        <text>RNA(n) + a ribonucleoside 5'-triphosphate = RNA(n+1) + diphosphate</text>
        <dbReference type="Rhea" id="RHEA:21248"/>
        <dbReference type="Rhea" id="RHEA-COMP:14527"/>
        <dbReference type="Rhea" id="RHEA-COMP:17342"/>
        <dbReference type="ChEBI" id="CHEBI:33019"/>
        <dbReference type="ChEBI" id="CHEBI:61557"/>
        <dbReference type="ChEBI" id="CHEBI:140395"/>
        <dbReference type="EC" id="2.7.7.6"/>
    </reaction>
</comment>
<comment type="subunit">
    <text evidence="1">Homodimer. The RNAP catalytic core consists of 2 alpha, 1 beta, 1 beta' and 1 omega subunit. When a sigma factor is associated with the core the holoenzyme is formed, which can initiate transcription.</text>
</comment>
<comment type="domain">
    <text evidence="1">The N-terminal domain is essential for RNAP assembly and basal transcription, whereas the C-terminal domain is involved in interaction with transcriptional regulators and with upstream promoter elements.</text>
</comment>
<comment type="similarity">
    <text evidence="1">Belongs to the RNA polymerase alpha chain family.</text>
</comment>
<proteinExistence type="inferred from homology"/>
<accession>B8EIT5</accession>
<dbReference type="EC" id="2.7.7.6" evidence="1"/>
<dbReference type="EMBL" id="CP001280">
    <property type="protein sequence ID" value="ACK51902.1"/>
    <property type="molecule type" value="Genomic_DNA"/>
</dbReference>
<dbReference type="RefSeq" id="WP_012591971.1">
    <property type="nucleotide sequence ID" value="NC_011666.1"/>
</dbReference>
<dbReference type="SMR" id="B8EIT5"/>
<dbReference type="STRING" id="395965.Msil_2991"/>
<dbReference type="KEGG" id="msl:Msil_2991"/>
<dbReference type="eggNOG" id="COG0202">
    <property type="taxonomic scope" value="Bacteria"/>
</dbReference>
<dbReference type="HOGENOM" id="CLU_053084_0_0_5"/>
<dbReference type="OrthoDB" id="9805706at2"/>
<dbReference type="Proteomes" id="UP000002257">
    <property type="component" value="Chromosome"/>
</dbReference>
<dbReference type="GO" id="GO:0005737">
    <property type="term" value="C:cytoplasm"/>
    <property type="evidence" value="ECO:0007669"/>
    <property type="project" value="UniProtKB-ARBA"/>
</dbReference>
<dbReference type="GO" id="GO:0000428">
    <property type="term" value="C:DNA-directed RNA polymerase complex"/>
    <property type="evidence" value="ECO:0007669"/>
    <property type="project" value="UniProtKB-KW"/>
</dbReference>
<dbReference type="GO" id="GO:0003677">
    <property type="term" value="F:DNA binding"/>
    <property type="evidence" value="ECO:0007669"/>
    <property type="project" value="UniProtKB-UniRule"/>
</dbReference>
<dbReference type="GO" id="GO:0003899">
    <property type="term" value="F:DNA-directed RNA polymerase activity"/>
    <property type="evidence" value="ECO:0007669"/>
    <property type="project" value="UniProtKB-UniRule"/>
</dbReference>
<dbReference type="GO" id="GO:0046983">
    <property type="term" value="F:protein dimerization activity"/>
    <property type="evidence" value="ECO:0007669"/>
    <property type="project" value="InterPro"/>
</dbReference>
<dbReference type="GO" id="GO:0006351">
    <property type="term" value="P:DNA-templated transcription"/>
    <property type="evidence" value="ECO:0007669"/>
    <property type="project" value="UniProtKB-UniRule"/>
</dbReference>
<dbReference type="CDD" id="cd06928">
    <property type="entry name" value="RNAP_alpha_NTD"/>
    <property type="match status" value="1"/>
</dbReference>
<dbReference type="FunFam" id="1.10.150.20:FF:000001">
    <property type="entry name" value="DNA-directed RNA polymerase subunit alpha"/>
    <property type="match status" value="1"/>
</dbReference>
<dbReference type="FunFam" id="2.170.120.12:FF:000001">
    <property type="entry name" value="DNA-directed RNA polymerase subunit alpha"/>
    <property type="match status" value="1"/>
</dbReference>
<dbReference type="Gene3D" id="1.10.150.20">
    <property type="entry name" value="5' to 3' exonuclease, C-terminal subdomain"/>
    <property type="match status" value="1"/>
</dbReference>
<dbReference type="Gene3D" id="2.170.120.12">
    <property type="entry name" value="DNA-directed RNA polymerase, insert domain"/>
    <property type="match status" value="1"/>
</dbReference>
<dbReference type="Gene3D" id="3.30.1360.10">
    <property type="entry name" value="RNA polymerase, RBP11-like subunit"/>
    <property type="match status" value="1"/>
</dbReference>
<dbReference type="HAMAP" id="MF_00059">
    <property type="entry name" value="RNApol_bact_RpoA"/>
    <property type="match status" value="1"/>
</dbReference>
<dbReference type="InterPro" id="IPR011262">
    <property type="entry name" value="DNA-dir_RNA_pol_insert"/>
</dbReference>
<dbReference type="InterPro" id="IPR011263">
    <property type="entry name" value="DNA-dir_RNA_pol_RpoA/D/Rpb3"/>
</dbReference>
<dbReference type="InterPro" id="IPR011773">
    <property type="entry name" value="DNA-dir_RpoA"/>
</dbReference>
<dbReference type="InterPro" id="IPR036603">
    <property type="entry name" value="RBP11-like"/>
</dbReference>
<dbReference type="InterPro" id="IPR011260">
    <property type="entry name" value="RNAP_asu_C"/>
</dbReference>
<dbReference type="InterPro" id="IPR036643">
    <property type="entry name" value="RNApol_insert_sf"/>
</dbReference>
<dbReference type="NCBIfam" id="NF003513">
    <property type="entry name" value="PRK05182.1-2"/>
    <property type="match status" value="1"/>
</dbReference>
<dbReference type="NCBIfam" id="NF003519">
    <property type="entry name" value="PRK05182.2-5"/>
    <property type="match status" value="1"/>
</dbReference>
<dbReference type="NCBIfam" id="TIGR02027">
    <property type="entry name" value="rpoA"/>
    <property type="match status" value="1"/>
</dbReference>
<dbReference type="Pfam" id="PF01000">
    <property type="entry name" value="RNA_pol_A_bac"/>
    <property type="match status" value="1"/>
</dbReference>
<dbReference type="Pfam" id="PF03118">
    <property type="entry name" value="RNA_pol_A_CTD"/>
    <property type="match status" value="1"/>
</dbReference>
<dbReference type="Pfam" id="PF01193">
    <property type="entry name" value="RNA_pol_L"/>
    <property type="match status" value="1"/>
</dbReference>
<dbReference type="SMART" id="SM00662">
    <property type="entry name" value="RPOLD"/>
    <property type="match status" value="1"/>
</dbReference>
<dbReference type="SUPFAM" id="SSF47789">
    <property type="entry name" value="C-terminal domain of RNA polymerase alpha subunit"/>
    <property type="match status" value="1"/>
</dbReference>
<dbReference type="SUPFAM" id="SSF56553">
    <property type="entry name" value="Insert subdomain of RNA polymerase alpha subunit"/>
    <property type="match status" value="1"/>
</dbReference>
<dbReference type="SUPFAM" id="SSF55257">
    <property type="entry name" value="RBP11-like subunits of RNA polymerase"/>
    <property type="match status" value="1"/>
</dbReference>